<feature type="chain" id="PRO_1000146935" description="Ribose-phosphate pyrophosphokinase">
    <location>
        <begin position="1"/>
        <end position="336"/>
    </location>
</feature>
<feature type="active site" evidence="1">
    <location>
        <position position="201"/>
    </location>
</feature>
<feature type="binding site" evidence="1">
    <location>
        <begin position="43"/>
        <end position="45"/>
    </location>
    <ligand>
        <name>ATP</name>
        <dbReference type="ChEBI" id="CHEBI:30616"/>
    </ligand>
</feature>
<feature type="binding site" evidence="1">
    <location>
        <begin position="102"/>
        <end position="103"/>
    </location>
    <ligand>
        <name>ATP</name>
        <dbReference type="ChEBI" id="CHEBI:30616"/>
    </ligand>
</feature>
<feature type="binding site" evidence="1">
    <location>
        <position position="136"/>
    </location>
    <ligand>
        <name>Mg(2+)</name>
        <dbReference type="ChEBI" id="CHEBI:18420"/>
        <label>1</label>
    </ligand>
</feature>
<feature type="binding site" evidence="1">
    <location>
        <position position="178"/>
    </location>
    <ligand>
        <name>Mg(2+)</name>
        <dbReference type="ChEBI" id="CHEBI:18420"/>
        <label>2</label>
    </ligand>
</feature>
<feature type="binding site" evidence="1">
    <location>
        <position position="203"/>
    </location>
    <ligand>
        <name>D-ribose 5-phosphate</name>
        <dbReference type="ChEBI" id="CHEBI:78346"/>
    </ligand>
</feature>
<feature type="binding site" evidence="1">
    <location>
        <position position="227"/>
    </location>
    <ligand>
        <name>D-ribose 5-phosphate</name>
        <dbReference type="ChEBI" id="CHEBI:78346"/>
    </ligand>
</feature>
<feature type="binding site" evidence="1">
    <location>
        <begin position="231"/>
        <end position="235"/>
    </location>
    <ligand>
        <name>D-ribose 5-phosphate</name>
        <dbReference type="ChEBI" id="CHEBI:78346"/>
    </ligand>
</feature>
<name>KPRS_CERSK</name>
<dbReference type="EC" id="2.7.6.1" evidence="1"/>
<dbReference type="EMBL" id="CP001150">
    <property type="protein sequence ID" value="ACM00483.1"/>
    <property type="molecule type" value="Genomic_DNA"/>
</dbReference>
<dbReference type="SMR" id="B9KPJ0"/>
<dbReference type="KEGG" id="rsk:RSKD131_0623"/>
<dbReference type="HOGENOM" id="CLU_033546_4_0_5"/>
<dbReference type="UniPathway" id="UPA00087">
    <property type="reaction ID" value="UER00172"/>
</dbReference>
<dbReference type="GO" id="GO:0005737">
    <property type="term" value="C:cytoplasm"/>
    <property type="evidence" value="ECO:0007669"/>
    <property type="project" value="UniProtKB-SubCell"/>
</dbReference>
<dbReference type="GO" id="GO:0002189">
    <property type="term" value="C:ribose phosphate diphosphokinase complex"/>
    <property type="evidence" value="ECO:0007669"/>
    <property type="project" value="TreeGrafter"/>
</dbReference>
<dbReference type="GO" id="GO:0005524">
    <property type="term" value="F:ATP binding"/>
    <property type="evidence" value="ECO:0007669"/>
    <property type="project" value="UniProtKB-KW"/>
</dbReference>
<dbReference type="GO" id="GO:0016301">
    <property type="term" value="F:kinase activity"/>
    <property type="evidence" value="ECO:0007669"/>
    <property type="project" value="UniProtKB-KW"/>
</dbReference>
<dbReference type="GO" id="GO:0000287">
    <property type="term" value="F:magnesium ion binding"/>
    <property type="evidence" value="ECO:0007669"/>
    <property type="project" value="UniProtKB-UniRule"/>
</dbReference>
<dbReference type="GO" id="GO:0004749">
    <property type="term" value="F:ribose phosphate diphosphokinase activity"/>
    <property type="evidence" value="ECO:0007669"/>
    <property type="project" value="UniProtKB-UniRule"/>
</dbReference>
<dbReference type="GO" id="GO:0006015">
    <property type="term" value="P:5-phosphoribose 1-diphosphate biosynthetic process"/>
    <property type="evidence" value="ECO:0007669"/>
    <property type="project" value="UniProtKB-UniRule"/>
</dbReference>
<dbReference type="GO" id="GO:0006164">
    <property type="term" value="P:purine nucleotide biosynthetic process"/>
    <property type="evidence" value="ECO:0007669"/>
    <property type="project" value="TreeGrafter"/>
</dbReference>
<dbReference type="GO" id="GO:0009156">
    <property type="term" value="P:ribonucleoside monophosphate biosynthetic process"/>
    <property type="evidence" value="ECO:0007669"/>
    <property type="project" value="InterPro"/>
</dbReference>
<dbReference type="CDD" id="cd06223">
    <property type="entry name" value="PRTases_typeI"/>
    <property type="match status" value="1"/>
</dbReference>
<dbReference type="FunFam" id="3.40.50.2020:FF:000001">
    <property type="entry name" value="Ribose-phosphate pyrophosphokinase"/>
    <property type="match status" value="1"/>
</dbReference>
<dbReference type="Gene3D" id="3.40.50.2020">
    <property type="match status" value="2"/>
</dbReference>
<dbReference type="HAMAP" id="MF_00583_B">
    <property type="entry name" value="RibP_PPkinase_B"/>
    <property type="match status" value="1"/>
</dbReference>
<dbReference type="InterPro" id="IPR000842">
    <property type="entry name" value="PRib_PP_synth_CS"/>
</dbReference>
<dbReference type="InterPro" id="IPR029099">
    <property type="entry name" value="Pribosyltran_N"/>
</dbReference>
<dbReference type="InterPro" id="IPR000836">
    <property type="entry name" value="PRibTrfase_dom"/>
</dbReference>
<dbReference type="InterPro" id="IPR029057">
    <property type="entry name" value="PRTase-like"/>
</dbReference>
<dbReference type="InterPro" id="IPR005946">
    <property type="entry name" value="Rib-P_diPkinase"/>
</dbReference>
<dbReference type="InterPro" id="IPR037515">
    <property type="entry name" value="Rib-P_diPkinase_bac"/>
</dbReference>
<dbReference type="NCBIfam" id="NF002320">
    <property type="entry name" value="PRK01259.1"/>
    <property type="match status" value="1"/>
</dbReference>
<dbReference type="NCBIfam" id="TIGR01251">
    <property type="entry name" value="ribP_PPkin"/>
    <property type="match status" value="1"/>
</dbReference>
<dbReference type="PANTHER" id="PTHR10210">
    <property type="entry name" value="RIBOSE-PHOSPHATE DIPHOSPHOKINASE FAMILY MEMBER"/>
    <property type="match status" value="1"/>
</dbReference>
<dbReference type="PANTHER" id="PTHR10210:SF41">
    <property type="entry name" value="RIBOSE-PHOSPHATE PYROPHOSPHOKINASE 1, CHLOROPLASTIC"/>
    <property type="match status" value="1"/>
</dbReference>
<dbReference type="Pfam" id="PF00156">
    <property type="entry name" value="Pribosyltran"/>
    <property type="match status" value="1"/>
</dbReference>
<dbReference type="Pfam" id="PF13793">
    <property type="entry name" value="Pribosyltran_N"/>
    <property type="match status" value="1"/>
</dbReference>
<dbReference type="SMART" id="SM01400">
    <property type="entry name" value="Pribosyltran_N"/>
    <property type="match status" value="1"/>
</dbReference>
<dbReference type="SUPFAM" id="SSF53271">
    <property type="entry name" value="PRTase-like"/>
    <property type="match status" value="1"/>
</dbReference>
<dbReference type="PROSITE" id="PS00114">
    <property type="entry name" value="PRPP_SYNTHASE"/>
    <property type="match status" value="1"/>
</dbReference>
<gene>
    <name evidence="1" type="primary">prs</name>
    <name type="ordered locus">RSKD131_0623</name>
</gene>
<protein>
    <recommendedName>
        <fullName evidence="1">Ribose-phosphate pyrophosphokinase</fullName>
        <shortName evidence="1">RPPK</shortName>
        <ecNumber evidence="1">2.7.6.1</ecNumber>
    </recommendedName>
    <alternativeName>
        <fullName evidence="1">5-phospho-D-ribosyl alpha-1-diphosphate synthase</fullName>
    </alternativeName>
    <alternativeName>
        <fullName evidence="1">Phosphoribosyl diphosphate synthase</fullName>
    </alternativeName>
    <alternativeName>
        <fullName evidence="1">Phosphoribosyl pyrophosphate synthase</fullName>
        <shortName evidence="1">P-Rib-PP synthase</shortName>
        <shortName evidence="1">PRPP synthase</shortName>
        <shortName evidence="1">PRPPase</shortName>
    </alternativeName>
</protein>
<accession>B9KPJ0</accession>
<reference key="1">
    <citation type="journal article" date="2009" name="J. Bacteriol.">
        <title>Complete genome sequence of Rhodobacter sphaeroides KD131.</title>
        <authorList>
            <person name="Lim S.-K."/>
            <person name="Kim S.J."/>
            <person name="Cha S.H."/>
            <person name="Oh Y.-K."/>
            <person name="Rhee H.-J."/>
            <person name="Kim M.-S."/>
            <person name="Lee J.K."/>
        </authorList>
    </citation>
    <scope>NUCLEOTIDE SEQUENCE [LARGE SCALE GENOMIC DNA]</scope>
    <source>
        <strain>KD131 / KCTC 12085</strain>
    </source>
</reference>
<proteinExistence type="inferred from homology"/>
<keyword id="KW-0067">ATP-binding</keyword>
<keyword id="KW-0963">Cytoplasm</keyword>
<keyword id="KW-0418">Kinase</keyword>
<keyword id="KW-0460">Magnesium</keyword>
<keyword id="KW-0479">Metal-binding</keyword>
<keyword id="KW-0545">Nucleotide biosynthesis</keyword>
<keyword id="KW-0547">Nucleotide-binding</keyword>
<keyword id="KW-0808">Transferase</keyword>
<comment type="function">
    <text evidence="1">Involved in the biosynthesis of the central metabolite phospho-alpha-D-ribosyl-1-pyrophosphate (PRPP) via the transfer of pyrophosphoryl group from ATP to 1-hydroxyl of ribose-5-phosphate (Rib-5-P).</text>
</comment>
<comment type="catalytic activity">
    <reaction evidence="1">
        <text>D-ribose 5-phosphate + ATP = 5-phospho-alpha-D-ribose 1-diphosphate + AMP + H(+)</text>
        <dbReference type="Rhea" id="RHEA:15609"/>
        <dbReference type="ChEBI" id="CHEBI:15378"/>
        <dbReference type="ChEBI" id="CHEBI:30616"/>
        <dbReference type="ChEBI" id="CHEBI:58017"/>
        <dbReference type="ChEBI" id="CHEBI:78346"/>
        <dbReference type="ChEBI" id="CHEBI:456215"/>
        <dbReference type="EC" id="2.7.6.1"/>
    </reaction>
</comment>
<comment type="cofactor">
    <cofactor evidence="1">
        <name>Mg(2+)</name>
        <dbReference type="ChEBI" id="CHEBI:18420"/>
    </cofactor>
    <text evidence="1">Binds 2 Mg(2+) ions per subunit.</text>
</comment>
<comment type="pathway">
    <text evidence="1">Metabolic intermediate biosynthesis; 5-phospho-alpha-D-ribose 1-diphosphate biosynthesis; 5-phospho-alpha-D-ribose 1-diphosphate from D-ribose 5-phosphate (route I): step 1/1.</text>
</comment>
<comment type="subunit">
    <text evidence="1">Homohexamer.</text>
</comment>
<comment type="subcellular location">
    <subcellularLocation>
        <location evidence="1">Cytoplasm</location>
    </subcellularLocation>
</comment>
<comment type="similarity">
    <text evidence="1">Belongs to the ribose-phosphate pyrophosphokinase family. Class I subfamily.</text>
</comment>
<sequence>MNEPKLISGNANLTLAKSIARRMSVHRGMAVSLVDARVERFNDQEIFVEVYENVRGEDMYVIQPTSNPANDNLMELLIIADALRRSSADRITAVIPYFGYARQDRRAKARTPISAKLVANLIVEAGIDRVLTLDLHAAQIQGFFDIPVDNLYSAPVFALDIEHHFKGQLQDLMVVSPDVGGVARAREIAKRINAPLAIVDKRREKPGEIAEMTVIGNVAGKKCIIVDDICDTAGTLCKAAEVLIENGAVEVHSYITHGVLSGPAVERVTKSVMKSLVITDSIEPSAAVRGAPNIRIVPTAPMFAQAILNIWSGTSVSSLFETDTLVPIYEGMYQRG</sequence>
<evidence type="ECO:0000255" key="1">
    <source>
        <dbReference type="HAMAP-Rule" id="MF_00583"/>
    </source>
</evidence>
<organism>
    <name type="scientific">Cereibacter sphaeroides (strain KD131 / KCTC 12085)</name>
    <name type="common">Rhodobacter sphaeroides</name>
    <dbReference type="NCBI Taxonomy" id="557760"/>
    <lineage>
        <taxon>Bacteria</taxon>
        <taxon>Pseudomonadati</taxon>
        <taxon>Pseudomonadota</taxon>
        <taxon>Alphaproteobacteria</taxon>
        <taxon>Rhodobacterales</taxon>
        <taxon>Paracoccaceae</taxon>
        <taxon>Cereibacter</taxon>
    </lineage>
</organism>